<name>P5CR1_BOVIN</name>
<comment type="function">
    <text evidence="1">Oxidoreductase that catalyzes the last step in proline biosynthesis, which corresponds to the reduction of pyrroline-5-carboxylate to L-proline using NAD(P)H. At physiologic concentrations, has higher specific activity in the presence of NADH. Involved in the cellular response to oxidative stress.</text>
</comment>
<comment type="catalytic activity">
    <reaction evidence="1">
        <text>L-proline + NADP(+) = (S)-1-pyrroline-5-carboxylate + NADPH + 2 H(+)</text>
        <dbReference type="Rhea" id="RHEA:14109"/>
        <dbReference type="ChEBI" id="CHEBI:15378"/>
        <dbReference type="ChEBI" id="CHEBI:17388"/>
        <dbReference type="ChEBI" id="CHEBI:57783"/>
        <dbReference type="ChEBI" id="CHEBI:58349"/>
        <dbReference type="ChEBI" id="CHEBI:60039"/>
        <dbReference type="EC" id="1.5.1.2"/>
    </reaction>
    <physiologicalReaction direction="right-to-left" evidence="1">
        <dbReference type="Rhea" id="RHEA:14111"/>
    </physiologicalReaction>
</comment>
<comment type="catalytic activity">
    <reaction evidence="1">
        <text>L-proline + NAD(+) = (S)-1-pyrroline-5-carboxylate + NADH + 2 H(+)</text>
        <dbReference type="Rhea" id="RHEA:14105"/>
        <dbReference type="ChEBI" id="CHEBI:15378"/>
        <dbReference type="ChEBI" id="CHEBI:17388"/>
        <dbReference type="ChEBI" id="CHEBI:57540"/>
        <dbReference type="ChEBI" id="CHEBI:57945"/>
        <dbReference type="ChEBI" id="CHEBI:60039"/>
        <dbReference type="EC" id="1.5.1.2"/>
    </reaction>
    <physiologicalReaction direction="right-to-left" evidence="1">
        <dbReference type="Rhea" id="RHEA:14107"/>
    </physiologicalReaction>
</comment>
<comment type="pathway">
    <text>Amino-acid biosynthesis; L-proline biosynthesis; L-proline from L-glutamate 5-semialdehyde: step 1/1.</text>
</comment>
<comment type="subunit">
    <text evidence="1">Homodecamer; composed of 5 homodimers. Interacts with LTO1.</text>
</comment>
<comment type="subcellular location">
    <subcellularLocation>
        <location evidence="1">Mitochondrion</location>
    </subcellularLocation>
</comment>
<comment type="similarity">
    <text evidence="3">Belongs to the pyrroline-5-carboxylate reductase family.</text>
</comment>
<accession>Q58DT4</accession>
<sequence length="320" mass="33454">MSVGFIGAGQLAFALAKGFTAAGVVAAHKIMASSPDMDLATVSALRKMGVNLTHHNKETVQHSDVLFLAVKPHIIPFILDEIAANIEARHIVVSCAAGVTISSIEKKLTAFQPAPKVIRCMTNTPVVVREGATVYATGTHAQVEDGRLLEQLMSSVGFCTEVEEDLIDAVTGLSGSGPAYAFTALDALADGGVKMGLPRRLAVRLGAQALLGAAKMLLDSEQHPGQLKDNVCSPGGATIHALHVLESGGFRSLLIKAVEASCTRTRELQSMADQEKVSPAAIKKTILDKVKLDSPPGTSLAPSGHSKLLPRSMAPAGKQD</sequence>
<dbReference type="EC" id="1.5.1.2" evidence="1"/>
<dbReference type="EMBL" id="BT021513">
    <property type="protein sequence ID" value="AAX46360.1"/>
    <property type="molecule type" value="mRNA"/>
</dbReference>
<dbReference type="EMBL" id="BC123510">
    <property type="protein sequence ID" value="AAI23511.1"/>
    <property type="molecule type" value="mRNA"/>
</dbReference>
<dbReference type="RefSeq" id="NP_001014957.1">
    <property type="nucleotide sequence ID" value="NM_001014957.1"/>
</dbReference>
<dbReference type="RefSeq" id="XP_010814772.1">
    <property type="nucleotide sequence ID" value="XM_010816470.2"/>
</dbReference>
<dbReference type="SMR" id="Q58DT4"/>
<dbReference type="FunCoup" id="Q58DT4">
    <property type="interactions" value="690"/>
</dbReference>
<dbReference type="STRING" id="9913.ENSBTAP00000071350"/>
<dbReference type="PaxDb" id="9913-ENSBTAP00000000046"/>
<dbReference type="PeptideAtlas" id="Q58DT4"/>
<dbReference type="Ensembl" id="ENSBTAT00000000046.4">
    <property type="protein sequence ID" value="ENSBTAP00000000046.2"/>
    <property type="gene ID" value="ENSBTAG00000000042.4"/>
</dbReference>
<dbReference type="GeneID" id="539606"/>
<dbReference type="KEGG" id="bta:539606"/>
<dbReference type="CTD" id="5831"/>
<dbReference type="VEuPathDB" id="HostDB:ENSBTAG00000000042"/>
<dbReference type="VGNC" id="VGNC:33586">
    <property type="gene designation" value="PYCR1"/>
</dbReference>
<dbReference type="eggNOG" id="KOG3124">
    <property type="taxonomic scope" value="Eukaryota"/>
</dbReference>
<dbReference type="GeneTree" id="ENSGT00950000183044"/>
<dbReference type="HOGENOM" id="CLU_042344_3_0_1"/>
<dbReference type="InParanoid" id="Q58DT4"/>
<dbReference type="OMA" id="VWAVKPQ"/>
<dbReference type="OrthoDB" id="10263291at2759"/>
<dbReference type="Reactome" id="R-BTA-8964539">
    <property type="pathway name" value="Glutamate and glutamine metabolism"/>
</dbReference>
<dbReference type="UniPathway" id="UPA00098">
    <property type="reaction ID" value="UER00361"/>
</dbReference>
<dbReference type="Proteomes" id="UP000009136">
    <property type="component" value="Chromosome 19"/>
</dbReference>
<dbReference type="Bgee" id="ENSBTAG00000000042">
    <property type="expression patterns" value="Expressed in saliva-secreting gland and 104 other cell types or tissues"/>
</dbReference>
<dbReference type="GO" id="GO:0005739">
    <property type="term" value="C:mitochondrion"/>
    <property type="evidence" value="ECO:0000250"/>
    <property type="project" value="UniProtKB"/>
</dbReference>
<dbReference type="GO" id="GO:0042802">
    <property type="term" value="F:identical protein binding"/>
    <property type="evidence" value="ECO:0007669"/>
    <property type="project" value="Ensembl"/>
</dbReference>
<dbReference type="GO" id="GO:0004735">
    <property type="term" value="F:pyrroline-5-carboxylate reductase activity"/>
    <property type="evidence" value="ECO:0000250"/>
    <property type="project" value="UniProtKB"/>
</dbReference>
<dbReference type="GO" id="GO:0034599">
    <property type="term" value="P:cellular response to oxidative stress"/>
    <property type="evidence" value="ECO:0000250"/>
    <property type="project" value="UniProtKB"/>
</dbReference>
<dbReference type="GO" id="GO:0055129">
    <property type="term" value="P:L-proline biosynthetic process"/>
    <property type="evidence" value="ECO:0000250"/>
    <property type="project" value="UniProtKB"/>
</dbReference>
<dbReference type="GO" id="GO:1903377">
    <property type="term" value="P:negative regulation of oxidative stress-induced neuron intrinsic apoptotic signaling pathway"/>
    <property type="evidence" value="ECO:0007669"/>
    <property type="project" value="Ensembl"/>
</dbReference>
<dbReference type="GO" id="GO:0006561">
    <property type="term" value="P:proline biosynthetic process"/>
    <property type="evidence" value="ECO:0000250"/>
    <property type="project" value="UniProtKB"/>
</dbReference>
<dbReference type="GO" id="GO:0051881">
    <property type="term" value="P:regulation of mitochondrial membrane potential"/>
    <property type="evidence" value="ECO:0007669"/>
    <property type="project" value="Ensembl"/>
</dbReference>
<dbReference type="FunFam" id="3.40.50.720:FF:000064">
    <property type="entry name" value="Pyrroline-5-carboxylate reductase 1"/>
    <property type="match status" value="1"/>
</dbReference>
<dbReference type="FunFam" id="1.10.3730.10:FF:000003">
    <property type="entry name" value="Pyrroline-5-carboxylate reductase 1, mitochondrial"/>
    <property type="match status" value="1"/>
</dbReference>
<dbReference type="Gene3D" id="3.40.50.720">
    <property type="entry name" value="NAD(P)-binding Rossmann-like Domain"/>
    <property type="match status" value="1"/>
</dbReference>
<dbReference type="Gene3D" id="1.10.3730.10">
    <property type="entry name" value="ProC C-terminal domain-like"/>
    <property type="match status" value="1"/>
</dbReference>
<dbReference type="HAMAP" id="MF_01925">
    <property type="entry name" value="P5C_reductase"/>
    <property type="match status" value="1"/>
</dbReference>
<dbReference type="InterPro" id="IPR008927">
    <property type="entry name" value="6-PGluconate_DH-like_C_sf"/>
</dbReference>
<dbReference type="InterPro" id="IPR036291">
    <property type="entry name" value="NAD(P)-bd_dom_sf"/>
</dbReference>
<dbReference type="InterPro" id="IPR028939">
    <property type="entry name" value="P5C_Rdtase_cat_N"/>
</dbReference>
<dbReference type="InterPro" id="IPR053790">
    <property type="entry name" value="P5CR-like_CS"/>
</dbReference>
<dbReference type="InterPro" id="IPR029036">
    <property type="entry name" value="P5CR_dimer"/>
</dbReference>
<dbReference type="InterPro" id="IPR000304">
    <property type="entry name" value="Pyrroline-COOH_reductase"/>
</dbReference>
<dbReference type="NCBIfam" id="TIGR00112">
    <property type="entry name" value="proC"/>
    <property type="match status" value="1"/>
</dbReference>
<dbReference type="PANTHER" id="PTHR11645">
    <property type="entry name" value="PYRROLINE-5-CARBOXYLATE REDUCTASE"/>
    <property type="match status" value="1"/>
</dbReference>
<dbReference type="PANTHER" id="PTHR11645:SF6">
    <property type="entry name" value="PYRROLINE-5-CARBOXYLATE REDUCTASE 1, MITOCHONDRIAL"/>
    <property type="match status" value="1"/>
</dbReference>
<dbReference type="Pfam" id="PF03807">
    <property type="entry name" value="F420_oxidored"/>
    <property type="match status" value="1"/>
</dbReference>
<dbReference type="Pfam" id="PF14748">
    <property type="entry name" value="P5CR_dimer"/>
    <property type="match status" value="1"/>
</dbReference>
<dbReference type="PIRSF" id="PIRSF000193">
    <property type="entry name" value="Pyrrol-5-carb_rd"/>
    <property type="match status" value="1"/>
</dbReference>
<dbReference type="SUPFAM" id="SSF48179">
    <property type="entry name" value="6-phosphogluconate dehydrogenase C-terminal domain-like"/>
    <property type="match status" value="1"/>
</dbReference>
<dbReference type="SUPFAM" id="SSF51735">
    <property type="entry name" value="NAD(P)-binding Rossmann-fold domains"/>
    <property type="match status" value="1"/>
</dbReference>
<dbReference type="PROSITE" id="PS00521">
    <property type="entry name" value="P5CR"/>
    <property type="match status" value="1"/>
</dbReference>
<proteinExistence type="evidence at transcript level"/>
<keyword id="KW-0007">Acetylation</keyword>
<keyword id="KW-0028">Amino-acid biosynthesis</keyword>
<keyword id="KW-0496">Mitochondrion</keyword>
<keyword id="KW-0521">NADP</keyword>
<keyword id="KW-0560">Oxidoreductase</keyword>
<keyword id="KW-0597">Phosphoprotein</keyword>
<keyword id="KW-0641">Proline biosynthesis</keyword>
<keyword id="KW-1185">Reference proteome</keyword>
<keyword id="KW-0346">Stress response</keyword>
<evidence type="ECO:0000250" key="1">
    <source>
        <dbReference type="UniProtKB" id="P32322"/>
    </source>
</evidence>
<evidence type="ECO:0000256" key="2">
    <source>
        <dbReference type="SAM" id="MobiDB-lite"/>
    </source>
</evidence>
<evidence type="ECO:0000305" key="3"/>
<reference key="1">
    <citation type="journal article" date="2005" name="BMC Genomics">
        <title>Characterization of 954 bovine full-CDS cDNA sequences.</title>
        <authorList>
            <person name="Harhay G.P."/>
            <person name="Sonstegard T.S."/>
            <person name="Keele J.W."/>
            <person name="Heaton M.P."/>
            <person name="Clawson M.L."/>
            <person name="Snelling W.M."/>
            <person name="Wiedmann R.T."/>
            <person name="Van Tassell C.P."/>
            <person name="Smith T.P.L."/>
        </authorList>
    </citation>
    <scope>NUCLEOTIDE SEQUENCE [LARGE SCALE MRNA]</scope>
</reference>
<reference key="2">
    <citation type="submission" date="2006-09" db="EMBL/GenBank/DDBJ databases">
        <authorList>
            <consortium name="NIH - Mammalian Gene Collection (MGC) project"/>
        </authorList>
    </citation>
    <scope>NUCLEOTIDE SEQUENCE [LARGE SCALE MRNA]</scope>
    <source>
        <strain>Hereford</strain>
        <tissue>Fetal muscle</tissue>
    </source>
</reference>
<organism>
    <name type="scientific">Bos taurus</name>
    <name type="common">Bovine</name>
    <dbReference type="NCBI Taxonomy" id="9913"/>
    <lineage>
        <taxon>Eukaryota</taxon>
        <taxon>Metazoa</taxon>
        <taxon>Chordata</taxon>
        <taxon>Craniata</taxon>
        <taxon>Vertebrata</taxon>
        <taxon>Euteleostomi</taxon>
        <taxon>Mammalia</taxon>
        <taxon>Eutheria</taxon>
        <taxon>Laurasiatheria</taxon>
        <taxon>Artiodactyla</taxon>
        <taxon>Ruminantia</taxon>
        <taxon>Pecora</taxon>
        <taxon>Bovidae</taxon>
        <taxon>Bovinae</taxon>
        <taxon>Bos</taxon>
    </lineage>
</organism>
<gene>
    <name type="primary">PYCR1</name>
</gene>
<protein>
    <recommendedName>
        <fullName>Pyrroline-5-carboxylate reductase 1, mitochondrial</fullName>
        <shortName>P5C reductase 1</shortName>
        <shortName>P5CR 1</shortName>
        <ecNumber evidence="1">1.5.1.2</ecNumber>
    </recommendedName>
</protein>
<feature type="initiator methionine" description="Removed" evidence="1">
    <location>
        <position position="1"/>
    </location>
</feature>
<feature type="chain" id="PRO_0000270817" description="Pyrroline-5-carboxylate reductase 1, mitochondrial">
    <location>
        <begin position="2"/>
        <end position="320"/>
    </location>
</feature>
<feature type="region of interest" description="Disordered" evidence="2">
    <location>
        <begin position="292"/>
        <end position="320"/>
    </location>
</feature>
<feature type="binding site" evidence="1">
    <location>
        <begin position="6"/>
        <end position="11"/>
    </location>
    <ligand>
        <name>NADP(+)</name>
        <dbReference type="ChEBI" id="CHEBI:58349"/>
    </ligand>
</feature>
<feature type="binding site" evidence="1">
    <location>
        <position position="8"/>
    </location>
    <ligand>
        <name>NADPH</name>
        <dbReference type="ChEBI" id="CHEBI:57783"/>
    </ligand>
</feature>
<feature type="binding site" evidence="1">
    <location>
        <position position="10"/>
    </location>
    <ligand>
        <name>NADPH</name>
        <dbReference type="ChEBI" id="CHEBI:57783"/>
    </ligand>
</feature>
<feature type="binding site" evidence="1">
    <location>
        <position position="11"/>
    </location>
    <ligand>
        <name>NADPH</name>
        <dbReference type="ChEBI" id="CHEBI:57783"/>
    </ligand>
</feature>
<feature type="binding site" evidence="1">
    <location>
        <position position="34"/>
    </location>
    <ligand>
        <name>NADP(+)</name>
        <dbReference type="ChEBI" id="CHEBI:58349"/>
    </ligand>
</feature>
<feature type="binding site" evidence="1">
    <location>
        <position position="34"/>
    </location>
    <ligand>
        <name>NADPH</name>
        <dbReference type="ChEBI" id="CHEBI:57783"/>
    </ligand>
</feature>
<feature type="binding site" evidence="1">
    <location>
        <position position="36"/>
    </location>
    <ligand>
        <name>NADPH</name>
        <dbReference type="ChEBI" id="CHEBI:57783"/>
    </ligand>
</feature>
<feature type="binding site" evidence="1">
    <location>
        <position position="56"/>
    </location>
    <ligand>
        <name>NADP(+)</name>
        <dbReference type="ChEBI" id="CHEBI:58349"/>
    </ligand>
</feature>
<feature type="binding site" evidence="1">
    <location>
        <position position="56"/>
    </location>
    <ligand>
        <name>NADPH</name>
        <dbReference type="ChEBI" id="CHEBI:57783"/>
    </ligand>
</feature>
<feature type="binding site" evidence="1">
    <location>
        <begin position="69"/>
        <end position="72"/>
    </location>
    <ligand>
        <name>NADP(+)</name>
        <dbReference type="ChEBI" id="CHEBI:58349"/>
    </ligand>
</feature>
<feature type="binding site" evidence="1">
    <location>
        <position position="70"/>
    </location>
    <ligand>
        <name>NADPH</name>
        <dbReference type="ChEBI" id="CHEBI:57783"/>
    </ligand>
</feature>
<feature type="binding site" evidence="1">
    <location>
        <position position="71"/>
    </location>
    <ligand>
        <name>NADPH</name>
        <dbReference type="ChEBI" id="CHEBI:57783"/>
    </ligand>
</feature>
<feature type="binding site" evidence="1">
    <location>
        <begin position="95"/>
        <end position="97"/>
    </location>
    <ligand>
        <name>NADP(+)</name>
        <dbReference type="ChEBI" id="CHEBI:58349"/>
    </ligand>
</feature>
<feature type="binding site" evidence="1">
    <location>
        <position position="97"/>
    </location>
    <ligand>
        <name>NADPH</name>
        <dbReference type="ChEBI" id="CHEBI:57783"/>
    </ligand>
</feature>
<feature type="binding site" evidence="1">
    <location>
        <position position="164"/>
    </location>
    <ligand>
        <name>L-proline</name>
        <dbReference type="ChEBI" id="CHEBI:60039"/>
    </ligand>
</feature>
<feature type="binding site" evidence="1">
    <location>
        <position position="230"/>
    </location>
    <ligand>
        <name>NADPH</name>
        <dbReference type="ChEBI" id="CHEBI:57783"/>
    </ligand>
</feature>
<feature type="binding site" evidence="1">
    <location>
        <position position="237"/>
    </location>
    <ligand>
        <name>L-proline</name>
        <dbReference type="ChEBI" id="CHEBI:60039"/>
    </ligand>
</feature>
<feature type="binding site" evidence="1">
    <location>
        <position position="238"/>
    </location>
    <ligand>
        <name>L-proline</name>
        <dbReference type="ChEBI" id="CHEBI:60039"/>
    </ligand>
</feature>
<feature type="modified residue" description="N-acetylserine" evidence="1">
    <location>
        <position position="2"/>
    </location>
</feature>
<feature type="modified residue" description="Phosphoserine" evidence="1">
    <location>
        <position position="278"/>
    </location>
</feature>